<organism>
    <name type="scientific">Parvibaculum lavamentivorans (strain DS-1 / DSM 13023 / NCIMB 13966)</name>
    <dbReference type="NCBI Taxonomy" id="402881"/>
    <lineage>
        <taxon>Bacteria</taxon>
        <taxon>Pseudomonadati</taxon>
        <taxon>Pseudomonadota</taxon>
        <taxon>Alphaproteobacteria</taxon>
        <taxon>Hyphomicrobiales</taxon>
        <taxon>Parvibaculaceae</taxon>
        <taxon>Parvibaculum</taxon>
    </lineage>
</organism>
<evidence type="ECO:0000255" key="1">
    <source>
        <dbReference type="HAMAP-Rule" id="MF_00013"/>
    </source>
</evidence>
<evidence type="ECO:0000255" key="2">
    <source>
        <dbReference type="PROSITE-ProRule" id="PRU01067"/>
    </source>
</evidence>
<accession>A7HWU9</accession>
<feature type="chain" id="PRO_0000321656" description="Octanoyltransferase">
    <location>
        <begin position="1"/>
        <end position="225"/>
    </location>
</feature>
<feature type="domain" description="BPL/LPL catalytic" evidence="2">
    <location>
        <begin position="43"/>
        <end position="225"/>
    </location>
</feature>
<feature type="active site" description="Acyl-thioester intermediate" evidence="1">
    <location>
        <position position="188"/>
    </location>
</feature>
<feature type="binding site" evidence="1">
    <location>
        <begin position="82"/>
        <end position="89"/>
    </location>
    <ligand>
        <name>substrate</name>
    </ligand>
</feature>
<feature type="binding site" evidence="1">
    <location>
        <begin position="157"/>
        <end position="159"/>
    </location>
    <ligand>
        <name>substrate</name>
    </ligand>
</feature>
<feature type="binding site" evidence="1">
    <location>
        <begin position="170"/>
        <end position="172"/>
    </location>
    <ligand>
        <name>substrate</name>
    </ligand>
</feature>
<feature type="site" description="Lowers pKa of active site Cys" evidence="1">
    <location>
        <position position="154"/>
    </location>
</feature>
<comment type="function">
    <text evidence="1">Catalyzes the transfer of endogenously produced octanoic acid from octanoyl-acyl-carrier-protein onto the lipoyl domains of lipoate-dependent enzymes. Lipoyl-ACP can also act as a substrate although octanoyl-ACP is likely to be the physiological substrate.</text>
</comment>
<comment type="catalytic activity">
    <reaction evidence="1">
        <text>octanoyl-[ACP] + L-lysyl-[protein] = N(6)-octanoyl-L-lysyl-[protein] + holo-[ACP] + H(+)</text>
        <dbReference type="Rhea" id="RHEA:17665"/>
        <dbReference type="Rhea" id="RHEA-COMP:9636"/>
        <dbReference type="Rhea" id="RHEA-COMP:9685"/>
        <dbReference type="Rhea" id="RHEA-COMP:9752"/>
        <dbReference type="Rhea" id="RHEA-COMP:9928"/>
        <dbReference type="ChEBI" id="CHEBI:15378"/>
        <dbReference type="ChEBI" id="CHEBI:29969"/>
        <dbReference type="ChEBI" id="CHEBI:64479"/>
        <dbReference type="ChEBI" id="CHEBI:78463"/>
        <dbReference type="ChEBI" id="CHEBI:78809"/>
        <dbReference type="EC" id="2.3.1.181"/>
    </reaction>
</comment>
<comment type="pathway">
    <text evidence="1">Protein modification; protein lipoylation via endogenous pathway; protein N(6)-(lipoyl)lysine from octanoyl-[acyl-carrier-protein]: step 1/2.</text>
</comment>
<comment type="subcellular location">
    <subcellularLocation>
        <location evidence="1">Cytoplasm</location>
    </subcellularLocation>
</comment>
<comment type="miscellaneous">
    <text evidence="1">In the reaction, the free carboxyl group of octanoic acid is attached via an amide linkage to the epsilon-amino group of a specific lysine residue of lipoyl domains of lipoate-dependent enzymes.</text>
</comment>
<comment type="similarity">
    <text evidence="1">Belongs to the LipB family.</text>
</comment>
<keyword id="KW-0012">Acyltransferase</keyword>
<keyword id="KW-0963">Cytoplasm</keyword>
<keyword id="KW-1185">Reference proteome</keyword>
<keyword id="KW-0808">Transferase</keyword>
<gene>
    <name evidence="1" type="primary">lipB</name>
    <name type="ordered locus">Plav_2774</name>
</gene>
<name>LIPB_PARL1</name>
<sequence length="225" mass="24903">MVKPLALDETTLEAPEWRISDLPVPYEEAVKTMEARAAAIAEGTAPELVWLLEHPALYTAGTSADETDLLDPKRFPVFSTGRGGQYTYHGPGQRVAYVMLDLKRRKPDVRAYVQDLERWLIATLAEFNVTGETRPDRVGVWVKRPEKGLTAEDKIAAIGVRIRKWVTFHGVSLNVEPDLDHFSGIVPCGISQFGVTSLADLGHTATMADVDLALKKTFRDVFGRG</sequence>
<proteinExistence type="inferred from homology"/>
<protein>
    <recommendedName>
        <fullName evidence="1">Octanoyltransferase</fullName>
        <ecNumber evidence="1">2.3.1.181</ecNumber>
    </recommendedName>
    <alternativeName>
        <fullName evidence="1">Lipoate-protein ligase B</fullName>
    </alternativeName>
    <alternativeName>
        <fullName evidence="1">Lipoyl/octanoyl transferase</fullName>
    </alternativeName>
    <alternativeName>
        <fullName evidence="1">Octanoyl-[acyl-carrier-protein]-protein N-octanoyltransferase</fullName>
    </alternativeName>
</protein>
<dbReference type="EC" id="2.3.1.181" evidence="1"/>
<dbReference type="EMBL" id="CP000774">
    <property type="protein sequence ID" value="ABS64382.1"/>
    <property type="molecule type" value="Genomic_DNA"/>
</dbReference>
<dbReference type="RefSeq" id="WP_012111696.1">
    <property type="nucleotide sequence ID" value="NC_009719.1"/>
</dbReference>
<dbReference type="SMR" id="A7HWU9"/>
<dbReference type="STRING" id="402881.Plav_2774"/>
<dbReference type="KEGG" id="pla:Plav_2774"/>
<dbReference type="eggNOG" id="COG0321">
    <property type="taxonomic scope" value="Bacteria"/>
</dbReference>
<dbReference type="HOGENOM" id="CLU_035168_3_0_5"/>
<dbReference type="OrthoDB" id="9787061at2"/>
<dbReference type="UniPathway" id="UPA00538">
    <property type="reaction ID" value="UER00592"/>
</dbReference>
<dbReference type="Proteomes" id="UP000006377">
    <property type="component" value="Chromosome"/>
</dbReference>
<dbReference type="GO" id="GO:0005737">
    <property type="term" value="C:cytoplasm"/>
    <property type="evidence" value="ECO:0007669"/>
    <property type="project" value="UniProtKB-SubCell"/>
</dbReference>
<dbReference type="GO" id="GO:0033819">
    <property type="term" value="F:lipoyl(octanoyl) transferase activity"/>
    <property type="evidence" value="ECO:0007669"/>
    <property type="project" value="UniProtKB-EC"/>
</dbReference>
<dbReference type="GO" id="GO:0036211">
    <property type="term" value="P:protein modification process"/>
    <property type="evidence" value="ECO:0007669"/>
    <property type="project" value="InterPro"/>
</dbReference>
<dbReference type="CDD" id="cd16444">
    <property type="entry name" value="LipB"/>
    <property type="match status" value="1"/>
</dbReference>
<dbReference type="FunFam" id="3.30.930.10:FF:000159">
    <property type="entry name" value="Octanoyltransferase"/>
    <property type="match status" value="1"/>
</dbReference>
<dbReference type="Gene3D" id="3.30.930.10">
    <property type="entry name" value="Bira Bifunctional Protein, Domain 2"/>
    <property type="match status" value="1"/>
</dbReference>
<dbReference type="HAMAP" id="MF_00013">
    <property type="entry name" value="LipB"/>
    <property type="match status" value="1"/>
</dbReference>
<dbReference type="InterPro" id="IPR045864">
    <property type="entry name" value="aa-tRNA-synth_II/BPL/LPL"/>
</dbReference>
<dbReference type="InterPro" id="IPR004143">
    <property type="entry name" value="BPL_LPL_catalytic"/>
</dbReference>
<dbReference type="InterPro" id="IPR000544">
    <property type="entry name" value="Octanoyltransferase"/>
</dbReference>
<dbReference type="InterPro" id="IPR020605">
    <property type="entry name" value="Octanoyltransferase_CS"/>
</dbReference>
<dbReference type="NCBIfam" id="TIGR00214">
    <property type="entry name" value="lipB"/>
    <property type="match status" value="1"/>
</dbReference>
<dbReference type="NCBIfam" id="NF010921">
    <property type="entry name" value="PRK14341.1"/>
    <property type="match status" value="1"/>
</dbReference>
<dbReference type="NCBIfam" id="NF010925">
    <property type="entry name" value="PRK14345.1"/>
    <property type="match status" value="1"/>
</dbReference>
<dbReference type="PANTHER" id="PTHR10993:SF7">
    <property type="entry name" value="LIPOYLTRANSFERASE 2, MITOCHONDRIAL-RELATED"/>
    <property type="match status" value="1"/>
</dbReference>
<dbReference type="PANTHER" id="PTHR10993">
    <property type="entry name" value="OCTANOYLTRANSFERASE"/>
    <property type="match status" value="1"/>
</dbReference>
<dbReference type="Pfam" id="PF21948">
    <property type="entry name" value="LplA-B_cat"/>
    <property type="match status" value="1"/>
</dbReference>
<dbReference type="PIRSF" id="PIRSF016262">
    <property type="entry name" value="LPLase"/>
    <property type="match status" value="1"/>
</dbReference>
<dbReference type="SUPFAM" id="SSF55681">
    <property type="entry name" value="Class II aaRS and biotin synthetases"/>
    <property type="match status" value="1"/>
</dbReference>
<dbReference type="PROSITE" id="PS51733">
    <property type="entry name" value="BPL_LPL_CATALYTIC"/>
    <property type="match status" value="1"/>
</dbReference>
<dbReference type="PROSITE" id="PS01313">
    <property type="entry name" value="LIPB"/>
    <property type="match status" value="1"/>
</dbReference>
<reference key="1">
    <citation type="journal article" date="2011" name="Stand. Genomic Sci.">
        <title>Complete genome sequence of Parvibaculum lavamentivorans type strain (DS-1(T)).</title>
        <authorList>
            <person name="Schleheck D."/>
            <person name="Weiss M."/>
            <person name="Pitluck S."/>
            <person name="Bruce D."/>
            <person name="Land M.L."/>
            <person name="Han S."/>
            <person name="Saunders E."/>
            <person name="Tapia R."/>
            <person name="Detter C."/>
            <person name="Brettin T."/>
            <person name="Han J."/>
            <person name="Woyke T."/>
            <person name="Goodwin L."/>
            <person name="Pennacchio L."/>
            <person name="Nolan M."/>
            <person name="Cook A.M."/>
            <person name="Kjelleberg S."/>
            <person name="Thomas T."/>
        </authorList>
    </citation>
    <scope>NUCLEOTIDE SEQUENCE [LARGE SCALE GENOMIC DNA]</scope>
    <source>
        <strain>DS-1 / DSM 13023 / NCIMB 13966</strain>
    </source>
</reference>